<dbReference type="EC" id="3.4.22.15" evidence="17"/>
<dbReference type="EMBL" id="X06086">
    <property type="protein sequence ID" value="CAA29470.1"/>
    <property type="molecule type" value="mRNA"/>
</dbReference>
<dbReference type="EMBL" id="J02583">
    <property type="protein sequence ID" value="AAA37445.1"/>
    <property type="molecule type" value="mRNA"/>
</dbReference>
<dbReference type="EMBL" id="M20495">
    <property type="protein sequence ID" value="AAA39984.1"/>
    <property type="molecule type" value="Genomic_DNA"/>
</dbReference>
<dbReference type="EMBL" id="AF121837">
    <property type="protein sequence ID" value="AAD32136.1"/>
    <property type="molecule type" value="mRNA"/>
</dbReference>
<dbReference type="EMBL" id="AF121838">
    <property type="protein sequence ID" value="AAD32137.1"/>
    <property type="molecule type" value="mRNA"/>
</dbReference>
<dbReference type="EMBL" id="AF121839">
    <property type="protein sequence ID" value="AAD32138.1"/>
    <property type="molecule type" value="mRNA"/>
</dbReference>
<dbReference type="EMBL" id="BC068163">
    <property type="protein sequence ID" value="AAH68163.1"/>
    <property type="molecule type" value="mRNA"/>
</dbReference>
<dbReference type="EMBL" id="X04392">
    <property type="protein sequence ID" value="CAA27980.1"/>
    <property type="molecule type" value="mRNA"/>
</dbReference>
<dbReference type="CCDS" id="CCDS26600.1"/>
<dbReference type="PIR" id="S01177">
    <property type="entry name" value="KHMSL"/>
</dbReference>
<dbReference type="RefSeq" id="NP_034114.1">
    <property type="nucleotide sequence ID" value="NM_009984.5"/>
</dbReference>
<dbReference type="RefSeq" id="XP_006517143.1">
    <property type="nucleotide sequence ID" value="XM_006517080.2"/>
</dbReference>
<dbReference type="SMR" id="P06797"/>
<dbReference type="BioGRID" id="198975">
    <property type="interactions" value="4"/>
</dbReference>
<dbReference type="FunCoup" id="P06797">
    <property type="interactions" value="829"/>
</dbReference>
<dbReference type="IntAct" id="P06797">
    <property type="interactions" value="5"/>
</dbReference>
<dbReference type="MINT" id="P06797"/>
<dbReference type="STRING" id="10090.ENSMUSP00000152169"/>
<dbReference type="BindingDB" id="P06797"/>
<dbReference type="ChEMBL" id="CHEMBL5291"/>
<dbReference type="MEROPS" id="C01.032"/>
<dbReference type="GlyConnect" id="2192">
    <property type="glycosylation" value="7 N-Linked glycans (1 site)"/>
</dbReference>
<dbReference type="GlyCosmos" id="P06797">
    <property type="glycosylation" value="1 site, 7 glycans"/>
</dbReference>
<dbReference type="GlyGen" id="P06797">
    <property type="glycosylation" value="4 sites, 9 N-linked glycans (2 sites)"/>
</dbReference>
<dbReference type="iPTMnet" id="P06797"/>
<dbReference type="PhosphoSitePlus" id="P06797"/>
<dbReference type="SwissPalm" id="P06797"/>
<dbReference type="jPOST" id="P06797"/>
<dbReference type="PaxDb" id="10090-ENSMUSP00000021933"/>
<dbReference type="PeptideAtlas" id="P06797"/>
<dbReference type="ProteomicsDB" id="279922"/>
<dbReference type="Pumba" id="P06797"/>
<dbReference type="DNASU" id="13039"/>
<dbReference type="Ensembl" id="ENSMUST00000021933.8">
    <property type="protein sequence ID" value="ENSMUSP00000021933.8"/>
    <property type="gene ID" value="ENSMUSG00000021477.10"/>
</dbReference>
<dbReference type="Ensembl" id="ENSMUST00000222517.2">
    <property type="protein sequence ID" value="ENSMUSP00000152169.2"/>
    <property type="gene ID" value="ENSMUSG00000021477.10"/>
</dbReference>
<dbReference type="GeneID" id="13039"/>
<dbReference type="KEGG" id="mmu:13039"/>
<dbReference type="UCSC" id="uc007qyw.1">
    <property type="organism name" value="mouse"/>
</dbReference>
<dbReference type="AGR" id="MGI:88564"/>
<dbReference type="CTD" id="1514"/>
<dbReference type="MGI" id="MGI:88564">
    <property type="gene designation" value="Ctsl"/>
</dbReference>
<dbReference type="VEuPathDB" id="HostDB:ENSMUSG00000021477"/>
<dbReference type="eggNOG" id="KOG1543">
    <property type="taxonomic scope" value="Eukaryota"/>
</dbReference>
<dbReference type="GeneTree" id="ENSGT00940000153321"/>
<dbReference type="HOGENOM" id="CLU_012184_1_2_1"/>
<dbReference type="InParanoid" id="P06797"/>
<dbReference type="OMA" id="HNGEYSE"/>
<dbReference type="OrthoDB" id="10253408at2759"/>
<dbReference type="PhylomeDB" id="P06797"/>
<dbReference type="TreeFam" id="TF313739"/>
<dbReference type="BioCyc" id="MetaCyc:MONOMER-14812"/>
<dbReference type="BRENDA" id="3.4.22.15">
    <property type="organism ID" value="3474"/>
</dbReference>
<dbReference type="Reactome" id="R-MMU-1474228">
    <property type="pathway name" value="Degradation of the extracellular matrix"/>
</dbReference>
<dbReference type="Reactome" id="R-MMU-1592389">
    <property type="pathway name" value="Activation of Matrix Metalloproteinases"/>
</dbReference>
<dbReference type="Reactome" id="R-MMU-1679131">
    <property type="pathway name" value="Trafficking and processing of endosomal TLR"/>
</dbReference>
<dbReference type="Reactome" id="R-MMU-2022090">
    <property type="pathway name" value="Assembly of collagen fibrils and other multimeric structures"/>
</dbReference>
<dbReference type="Reactome" id="R-MMU-2132295">
    <property type="pathway name" value="MHC class II antigen presentation"/>
</dbReference>
<dbReference type="Reactome" id="R-MMU-8939242">
    <property type="pathway name" value="RUNX1 regulates transcription of genes involved in differentiation of keratinocytes"/>
</dbReference>
<dbReference type="BioGRID-ORCS" id="13039">
    <property type="hits" value="4 hits in 80 CRISPR screens"/>
</dbReference>
<dbReference type="ChiTaRS" id="Ctsl">
    <property type="organism name" value="mouse"/>
</dbReference>
<dbReference type="PRO" id="PR:P06797"/>
<dbReference type="Proteomes" id="UP000000589">
    <property type="component" value="Chromosome 13"/>
</dbReference>
<dbReference type="RNAct" id="P06797">
    <property type="molecule type" value="protein"/>
</dbReference>
<dbReference type="Bgee" id="ENSMUSG00000021477">
    <property type="expression patterns" value="Expressed in ectoplacental cone and 276 other cell types or tissues"/>
</dbReference>
<dbReference type="ExpressionAtlas" id="P06797">
    <property type="expression patterns" value="baseline and differential"/>
</dbReference>
<dbReference type="GO" id="GO:0016324">
    <property type="term" value="C:apical plasma membrane"/>
    <property type="evidence" value="ECO:0007669"/>
    <property type="project" value="UniProtKB-SubCell"/>
</dbReference>
<dbReference type="GO" id="GO:0042583">
    <property type="term" value="C:chromaffin granule"/>
    <property type="evidence" value="ECO:0000250"/>
    <property type="project" value="UniProtKB"/>
</dbReference>
<dbReference type="GO" id="GO:0062023">
    <property type="term" value="C:collagen-containing extracellular matrix"/>
    <property type="evidence" value="ECO:0007005"/>
    <property type="project" value="BHF-UCL"/>
</dbReference>
<dbReference type="GO" id="GO:0005737">
    <property type="term" value="C:cytoplasm"/>
    <property type="evidence" value="ECO:0000250"/>
    <property type="project" value="BHF-UCL"/>
</dbReference>
<dbReference type="GO" id="GO:0031410">
    <property type="term" value="C:cytoplasmic vesicle"/>
    <property type="evidence" value="ECO:0000314"/>
    <property type="project" value="MGI"/>
</dbReference>
<dbReference type="GO" id="GO:0009897">
    <property type="term" value="C:external side of plasma membrane"/>
    <property type="evidence" value="ECO:0000314"/>
    <property type="project" value="UniProtKB"/>
</dbReference>
<dbReference type="GO" id="GO:0005615">
    <property type="term" value="C:extracellular space"/>
    <property type="evidence" value="ECO:0000314"/>
    <property type="project" value="UniProtKB"/>
</dbReference>
<dbReference type="GO" id="GO:0005764">
    <property type="term" value="C:lysosome"/>
    <property type="evidence" value="ECO:0000314"/>
    <property type="project" value="UniProtKB"/>
</dbReference>
<dbReference type="GO" id="GO:0005902">
    <property type="term" value="C:microvillus"/>
    <property type="evidence" value="ECO:0000250"/>
    <property type="project" value="BHF-UCL"/>
</dbReference>
<dbReference type="GO" id="GO:0005730">
    <property type="term" value="C:nucleolus"/>
    <property type="evidence" value="ECO:0000314"/>
    <property type="project" value="BHF-UCL"/>
</dbReference>
<dbReference type="GO" id="GO:0005634">
    <property type="term" value="C:nucleus"/>
    <property type="evidence" value="ECO:0000314"/>
    <property type="project" value="BHF-UCL"/>
</dbReference>
<dbReference type="GO" id="GO:0043204">
    <property type="term" value="C:perikaryon"/>
    <property type="evidence" value="ECO:0000250"/>
    <property type="project" value="BHF-UCL"/>
</dbReference>
<dbReference type="GO" id="GO:0004177">
    <property type="term" value="F:aminopeptidase activity"/>
    <property type="evidence" value="ECO:0000250"/>
    <property type="project" value="BHF-UCL"/>
</dbReference>
<dbReference type="GO" id="GO:0016807">
    <property type="term" value="F:cysteine-type carboxypeptidase activity"/>
    <property type="evidence" value="ECO:0000314"/>
    <property type="project" value="MGI"/>
</dbReference>
<dbReference type="GO" id="GO:0004197">
    <property type="term" value="F:cysteine-type endopeptidase activity"/>
    <property type="evidence" value="ECO:0000250"/>
    <property type="project" value="UniProtKB"/>
</dbReference>
<dbReference type="GO" id="GO:0004175">
    <property type="term" value="F:endopeptidase activity"/>
    <property type="evidence" value="ECO:0000315"/>
    <property type="project" value="UniProtKB"/>
</dbReference>
<dbReference type="GO" id="GO:0042393">
    <property type="term" value="F:histone binding"/>
    <property type="evidence" value="ECO:0000314"/>
    <property type="project" value="BHF-UCL"/>
</dbReference>
<dbReference type="GO" id="GO:0046872">
    <property type="term" value="F:metal ion binding"/>
    <property type="evidence" value="ECO:0007669"/>
    <property type="project" value="UniProtKB-KW"/>
</dbReference>
<dbReference type="GO" id="GO:0042277">
    <property type="term" value="F:peptide binding"/>
    <property type="evidence" value="ECO:0000250"/>
    <property type="project" value="BHF-UCL"/>
</dbReference>
<dbReference type="GO" id="GO:0048002">
    <property type="term" value="P:antigen processing and presentation of peptide antigen"/>
    <property type="evidence" value="ECO:0000315"/>
    <property type="project" value="UniProtKB"/>
</dbReference>
<dbReference type="GO" id="GO:0048102">
    <property type="term" value="P:autophagic cell death"/>
    <property type="evidence" value="ECO:0000250"/>
    <property type="project" value="BHF-UCL"/>
</dbReference>
<dbReference type="GO" id="GO:0043373">
    <property type="term" value="P:CD4-positive, alpha-beta T cell lineage commitment"/>
    <property type="evidence" value="ECO:0000315"/>
    <property type="project" value="UniProtKB"/>
</dbReference>
<dbReference type="GO" id="GO:0009267">
    <property type="term" value="P:cellular response to starvation"/>
    <property type="evidence" value="ECO:0000250"/>
    <property type="project" value="BHF-UCL"/>
</dbReference>
<dbReference type="GO" id="GO:0030574">
    <property type="term" value="P:collagen catabolic process"/>
    <property type="evidence" value="ECO:0000314"/>
    <property type="project" value="UniProtKB"/>
</dbReference>
<dbReference type="GO" id="GO:0046697">
    <property type="term" value="P:decidualization"/>
    <property type="evidence" value="ECO:0000316"/>
    <property type="project" value="MGI"/>
</dbReference>
<dbReference type="GO" id="GO:0060309">
    <property type="term" value="P:elastin catabolic process"/>
    <property type="evidence" value="ECO:0000315"/>
    <property type="project" value="UniProtKB"/>
</dbReference>
<dbReference type="GO" id="GO:0034230">
    <property type="term" value="P:enkephalin processing"/>
    <property type="evidence" value="ECO:0000250"/>
    <property type="project" value="UniProtKB"/>
</dbReference>
<dbReference type="GO" id="GO:0031069">
    <property type="term" value="P:hair follicle morphogenesis"/>
    <property type="evidence" value="ECO:0000315"/>
    <property type="project" value="MGI"/>
</dbReference>
<dbReference type="GO" id="GO:0043616">
    <property type="term" value="P:keratinocyte proliferation"/>
    <property type="evidence" value="ECO:0000315"/>
    <property type="project" value="MGI"/>
</dbReference>
<dbReference type="GO" id="GO:0008584">
    <property type="term" value="P:male gonad development"/>
    <property type="evidence" value="ECO:0000250"/>
    <property type="project" value="BHF-UCL"/>
</dbReference>
<dbReference type="GO" id="GO:0010839">
    <property type="term" value="P:negative regulation of keratinocyte proliferation"/>
    <property type="evidence" value="ECO:0000315"/>
    <property type="project" value="MGI"/>
</dbReference>
<dbReference type="GO" id="GO:0021675">
    <property type="term" value="P:nerve development"/>
    <property type="evidence" value="ECO:0000250"/>
    <property type="project" value="BHF-UCL"/>
</dbReference>
<dbReference type="GO" id="GO:0016540">
    <property type="term" value="P:protein autoprocessing"/>
    <property type="evidence" value="ECO:0000314"/>
    <property type="project" value="MGI"/>
</dbReference>
<dbReference type="GO" id="GO:0006508">
    <property type="term" value="P:proteolysis"/>
    <property type="evidence" value="ECO:0000314"/>
    <property type="project" value="BHF-UCL"/>
</dbReference>
<dbReference type="GO" id="GO:0051603">
    <property type="term" value="P:proteolysis involved in protein catabolic process"/>
    <property type="evidence" value="ECO:0000315"/>
    <property type="project" value="UniProtKB"/>
</dbReference>
<dbReference type="GO" id="GO:0051384">
    <property type="term" value="P:response to glucocorticoid"/>
    <property type="evidence" value="ECO:0000250"/>
    <property type="project" value="BHF-UCL"/>
</dbReference>
<dbReference type="GO" id="GO:0009749">
    <property type="term" value="P:response to glucose"/>
    <property type="evidence" value="ECO:0000250"/>
    <property type="project" value="BHF-UCL"/>
</dbReference>
<dbReference type="GO" id="GO:0034698">
    <property type="term" value="P:response to gonadotropin"/>
    <property type="evidence" value="ECO:0000250"/>
    <property type="project" value="BHF-UCL"/>
</dbReference>
<dbReference type="GO" id="GO:0060008">
    <property type="term" value="P:Sertoli cell differentiation"/>
    <property type="evidence" value="ECO:0000250"/>
    <property type="project" value="BHF-UCL"/>
</dbReference>
<dbReference type="GO" id="GO:0007283">
    <property type="term" value="P:spermatogenesis"/>
    <property type="evidence" value="ECO:0000250"/>
    <property type="project" value="BHF-UCL"/>
</dbReference>
<dbReference type="GO" id="GO:0006590">
    <property type="term" value="P:thyroid hormone generation"/>
    <property type="evidence" value="ECO:0000315"/>
    <property type="project" value="UniProtKB"/>
</dbReference>
<dbReference type="GO" id="GO:0031638">
    <property type="term" value="P:zymogen activation"/>
    <property type="evidence" value="ECO:0000250"/>
    <property type="project" value="UniProtKB"/>
</dbReference>
<dbReference type="CDD" id="cd02248">
    <property type="entry name" value="Peptidase_C1A"/>
    <property type="match status" value="1"/>
</dbReference>
<dbReference type="FunFam" id="3.90.70.10:FF:000332">
    <property type="entry name" value="Cathepsin L1"/>
    <property type="match status" value="1"/>
</dbReference>
<dbReference type="Gene3D" id="3.90.70.10">
    <property type="entry name" value="Cysteine proteinases"/>
    <property type="match status" value="1"/>
</dbReference>
<dbReference type="InterPro" id="IPR038765">
    <property type="entry name" value="Papain-like_cys_pep_sf"/>
</dbReference>
<dbReference type="InterPro" id="IPR025661">
    <property type="entry name" value="Pept_asp_AS"/>
</dbReference>
<dbReference type="InterPro" id="IPR000169">
    <property type="entry name" value="Pept_cys_AS"/>
</dbReference>
<dbReference type="InterPro" id="IPR025660">
    <property type="entry name" value="Pept_his_AS"/>
</dbReference>
<dbReference type="InterPro" id="IPR013128">
    <property type="entry name" value="Peptidase_C1A"/>
</dbReference>
<dbReference type="InterPro" id="IPR000668">
    <property type="entry name" value="Peptidase_C1A_C"/>
</dbReference>
<dbReference type="InterPro" id="IPR039417">
    <property type="entry name" value="Peptidase_C1A_papain-like"/>
</dbReference>
<dbReference type="InterPro" id="IPR013201">
    <property type="entry name" value="Prot_inhib_I29"/>
</dbReference>
<dbReference type="PANTHER" id="PTHR12411">
    <property type="entry name" value="CYSTEINE PROTEASE FAMILY C1-RELATED"/>
    <property type="match status" value="1"/>
</dbReference>
<dbReference type="Pfam" id="PF08246">
    <property type="entry name" value="Inhibitor_I29"/>
    <property type="match status" value="1"/>
</dbReference>
<dbReference type="Pfam" id="PF00112">
    <property type="entry name" value="Peptidase_C1"/>
    <property type="match status" value="1"/>
</dbReference>
<dbReference type="PRINTS" id="PR00705">
    <property type="entry name" value="PAPAIN"/>
</dbReference>
<dbReference type="SMART" id="SM00848">
    <property type="entry name" value="Inhibitor_I29"/>
    <property type="match status" value="1"/>
</dbReference>
<dbReference type="SMART" id="SM00645">
    <property type="entry name" value="Pept_C1"/>
    <property type="match status" value="1"/>
</dbReference>
<dbReference type="SUPFAM" id="SSF54001">
    <property type="entry name" value="Cysteine proteinases"/>
    <property type="match status" value="1"/>
</dbReference>
<dbReference type="PROSITE" id="PS00640">
    <property type="entry name" value="THIOL_PROTEASE_ASN"/>
    <property type="match status" value="1"/>
</dbReference>
<dbReference type="PROSITE" id="PS00139">
    <property type="entry name" value="THIOL_PROTEASE_CYS"/>
    <property type="match status" value="1"/>
</dbReference>
<dbReference type="PROSITE" id="PS00639">
    <property type="entry name" value="THIOL_PROTEASE_HIS"/>
    <property type="match status" value="1"/>
</dbReference>
<protein>
    <recommendedName>
        <fullName evidence="19">Procathepsin L</fullName>
        <ecNumber evidence="17">3.4.22.15</ecNumber>
    </recommendedName>
    <alternativeName>
        <fullName>Cathepsin L1</fullName>
    </alternativeName>
    <alternativeName>
        <fullName>Major excreted protein</fullName>
        <shortName>MEP</shortName>
    </alternativeName>
    <alternativeName>
        <fullName>p39 cysteine proteinase</fullName>
    </alternativeName>
    <component>
        <recommendedName>
            <fullName>Cathepsin L</fullName>
        </recommendedName>
    </component>
    <component>
        <recommendedName>
            <fullName>Cathepsin L heavy chain</fullName>
        </recommendedName>
    </component>
    <component>
        <recommendedName>
            <fullName>Cathepsin L light chain</fullName>
        </recommendedName>
    </component>
</protein>
<accession>P06797</accession>
<accession>Q91UZ0</accession>
<reference key="1">
    <citation type="journal article" date="1987" name="Biochem. J.">
        <title>Sequence and expression of the cDNA for MEP (major excreted protein), a transformation-regulated secreted cathepsin.</title>
        <authorList>
            <person name="Troen B.R."/>
            <person name="Gal S."/>
            <person name="Gottesman M.M."/>
        </authorList>
    </citation>
    <scope>NUCLEOTIDE SEQUENCE [MRNA]</scope>
    <scope>PARTIAL PROTEIN SEQUENCE</scope>
</reference>
<reference key="2">
    <citation type="journal article" date="1988" name="J. Clin. Invest.">
        <title>Complete nucleotide and deduced amino acid sequences of human and murine preprocathepsin L. An abundant transcript induced by transformation of fibroblasts.</title>
        <authorList>
            <person name="Joseph L.J."/>
            <person name="Chang L.C."/>
            <person name="Stamenkovich D."/>
            <person name="Sukhatme V.P."/>
        </authorList>
    </citation>
    <scope>NUCLEOTIDE SEQUENCE [GENOMIC DNA]</scope>
</reference>
<reference key="3">
    <citation type="journal article" date="1986" name="J. Biol. Chem.">
        <title>Cloning and characterization of a mouse cysteine proteinase.</title>
        <authorList>
            <person name="Portnoy D.A."/>
            <person name="Erickson A.H."/>
            <person name="Kochan J."/>
            <person name="Ravetch J.V."/>
            <person name="Unkeless J.C."/>
        </authorList>
    </citation>
    <scope>NUCLEOTIDE SEQUENCE [MRNA]</scope>
</reference>
<reference key="4">
    <citation type="journal article" date="1990" name="Arch. Biochem. Biophys.">
        <title>Comparison of cathepsin L synthesized by normal and transformed cells at the gene, message, protein, and oligosaccharide levels.</title>
        <authorList>
            <person name="Stearns N.A."/>
            <person name="Dong J."/>
            <person name="Pan J.X."/>
            <person name="Brenner D.A."/>
            <person name="Sahagian G.G."/>
        </authorList>
    </citation>
    <scope>NUCLEOTIDE SEQUENCE</scope>
    <scope>GLYCOSYLATION AT ASN-221</scope>
    <source>
        <tissue>Liver</tissue>
    </source>
</reference>
<reference key="5">
    <citation type="journal article" date="1999" name="J. Virol.">
        <title>Mutant cells selected during persistent reovirus infection do not express mature cathepsin L and do not support reovirus disassembly.</title>
        <authorList>
            <person name="Baer G.S."/>
            <person name="Ebert D.H."/>
            <person name="Chung C.J."/>
            <person name="Erickson A.H."/>
            <person name="Dermody T.S."/>
        </authorList>
    </citation>
    <scope>NUCLEOTIDE SEQUENCE [MRNA]</scope>
    <source>
        <strain>C3H/An</strain>
    </source>
</reference>
<reference key="6">
    <citation type="journal article" date="2004" name="Genome Res.">
        <title>The status, quality, and expansion of the NIH full-length cDNA project: the Mammalian Gene Collection (MGC).</title>
        <authorList>
            <consortium name="The MGC Project Team"/>
        </authorList>
    </citation>
    <scope>NUCLEOTIDE SEQUENCE [LARGE SCALE MRNA]</scope>
    <source>
        <strain>C57BL/6J</strain>
        <tissue>Brain</tissue>
    </source>
</reference>
<reference key="7">
    <citation type="journal article" date="1995" name="Biochem. J.">
        <title>Identification on melanoma cells of p39, a cysteine proteinase that cleaves C3, the third component of complement: amino-acid-sequence identities with procathepsin L.</title>
        <authorList>
            <person name="Jean D."/>
            <person name="Hermann J."/>
            <person name="Rodrigues-Lima F."/>
            <person name="Barel M."/>
            <person name="Balbo M."/>
            <person name="Frade R."/>
        </authorList>
    </citation>
    <scope>PROTEIN SEQUENCE OF 18-34; 273-292 AND 295-313</scope>
    <scope>CATALYTIC ACTIVITY</scope>
</reference>
<reference key="8">
    <citation type="journal article" date="1986" name="Cancer Res.">
        <title>Close relationship of the major excreted protein of transformed murine fibroblasts to thiol-dependent cathepsins.</title>
        <authorList>
            <person name="Denhardt D.T."/>
            <person name="Hamilton R.T."/>
            <person name="Parfett C.L.J."/>
            <person name="Edwards D.R."/>
            <person name="Pierre R.S."/>
            <person name="Waterhouse P."/>
            <person name="Nilson-Hamilton M."/>
        </authorList>
    </citation>
    <scope>NUCLEOTIDE SEQUENCE OF 89-300</scope>
    <source>
        <strain>BNL</strain>
    </source>
</reference>
<reference key="9">
    <citation type="journal article" date="1998" name="Science">
        <title>Cathepsin L: critical role in Ii degradation and CD4 T cell selection in the thymus.</title>
        <authorList>
            <person name="Nakagawa T."/>
            <person name="Roth W."/>
            <person name="Wong P."/>
            <person name="Nelson A."/>
            <person name="Farr A."/>
            <person name="Deussing J."/>
            <person name="Villadangos J.A."/>
            <person name="Ploegh H."/>
            <person name="Peters C."/>
            <person name="Rudensky A.Y."/>
        </authorList>
    </citation>
    <scope>FUNCTION</scope>
    <scope>TISSUE SPECIFICITY</scope>
    <scope>DISRUPTION PHENOTYPE</scope>
</reference>
<reference key="10">
    <citation type="journal article" date="2000" name="EMBO J.">
        <title>Secreted cathepsin L generates endostatin from collagen XVIII.</title>
        <authorList>
            <person name="Felbor U."/>
            <person name="Dreier L."/>
            <person name="Bryant R.A."/>
            <person name="Ploegh H.L."/>
            <person name="Olsen B.R."/>
            <person name="Mothes W."/>
        </authorList>
    </citation>
    <scope>FUNCTION</scope>
    <scope>SUBCELLULAR LOCATION</scope>
    <scope>BIOPHYSICOCHEMICAL PROPERTIES</scope>
</reference>
<reference key="11">
    <citation type="journal article" date="2001" name="EMBO J.">
        <title>The p41 isoform of invariant chain is a chaperone for cathepsin L.</title>
        <authorList>
            <person name="Lennon-Dumenil A.M."/>
            <person name="Roberts R.A."/>
            <person name="Valentijn K."/>
            <person name="Driessen C."/>
            <person name="Overkleeft H.S."/>
            <person name="Erickson A."/>
            <person name="Peters P.J."/>
            <person name="Bikoff E."/>
            <person name="Ploegh H.L."/>
            <person name="Wolf Bryant P."/>
        </authorList>
    </citation>
    <scope>FUNCTION</scope>
    <scope>ACTIVITY REGULATION</scope>
    <scope>INTERACTION WITH CD74</scope>
    <scope>TISSUE SPECIFICITY</scope>
    <scope>SUBCELLULAR LOCATION</scope>
    <scope>SUBUNIT</scope>
    <scope>PROTEOLYTICAL CLEAVAGE</scope>
</reference>
<reference key="12">
    <citation type="journal article" date="2002" name="Am. J. Pathol.">
        <title>Impaired hair follicle morphogenesis and cycling with abnormal epidermal differentiation in nackt mice, a cathepsin L-deficient mutation.</title>
        <authorList>
            <person name="Benavides F."/>
            <person name="Starost M.F."/>
            <person name="Flores M."/>
            <person name="Gimenez-Conti I.B."/>
            <person name="Guenet J.L."/>
            <person name="Conti C.J."/>
        </authorList>
    </citation>
    <scope>FUNCTION</scope>
    <scope>DISRUPTION PHENOTYPE</scope>
</reference>
<reference key="13">
    <citation type="journal article" date="2002" name="J. Exp. Med.">
        <title>Cathepsin L regulates CD4+ T cell selection independently of its effect on invariant chain: a role in the generation of positively selecting peptide ligands.</title>
        <authorList>
            <person name="Honey K."/>
            <person name="Nakagawa T."/>
            <person name="Peters C."/>
            <person name="Rudensky A."/>
        </authorList>
    </citation>
    <scope>FUNCTION</scope>
    <scope>DISRUPTION PHENOTYPE</scope>
</reference>
<reference key="14">
    <citation type="journal article" date="2002" name="J. Exp. Med.">
        <title>Invariant chain controls the activity of extracellular cathepsin L.</title>
        <authorList>
            <person name="Fiebiger E."/>
            <person name="Maehr R."/>
            <person name="Villadangos J."/>
            <person name="Weber E."/>
            <person name="Erickson A."/>
            <person name="Bikoff E."/>
            <person name="Ploegh H.L."/>
            <person name="Lennon-Dumenil A.M."/>
        </authorList>
    </citation>
    <scope>FUNCTION</scope>
    <scope>TISSUE SPECIFICITY</scope>
    <scope>SUBCELLULAR LOCATION</scope>
    <scope>INTERACTION WITH CD74</scope>
    <scope>ACTIVITY REGULATION</scope>
</reference>
<reference key="15">
    <citation type="journal article" date="2002" name="Proc. Natl. Acad. Sci. U.S.A.">
        <title>Dilated cardiomyopathy in mice deficient for the lysosomal cysteine peptidase cathepsin L.</title>
        <authorList>
            <person name="Stypmann J."/>
            <person name="Glaeser K."/>
            <person name="Roth W."/>
            <person name="Tobin D.J."/>
            <person name="Petermann I."/>
            <person name="Matthias R."/>
            <person name="Moennig G."/>
            <person name="Haverkamp W."/>
            <person name="Breithardt G."/>
            <person name="Schmahl W."/>
            <person name="Peters C."/>
            <person name="Reinheckel T."/>
        </authorList>
    </citation>
    <scope>FUNCTION</scope>
    <scope>DISRUPTION PHENOTYPE</scope>
</reference>
<reference key="16">
    <citation type="journal article" date="2003" name="J. Clin. Invest.">
        <title>Thyroid functions of mouse cathepsins B, K, and L.</title>
        <authorList>
            <person name="Friedrichs B."/>
            <person name="Tepel C."/>
            <person name="Reinheckel T."/>
            <person name="Deussing J."/>
            <person name="von Figura K."/>
            <person name="Herzog V."/>
            <person name="Peters C."/>
            <person name="Saftig P."/>
            <person name="Brix K."/>
        </authorList>
    </citation>
    <scope>FUNCTION</scope>
    <scope>SUBCELLULAR LOCATION</scope>
    <scope>TISSUE SPECIFICITY</scope>
    <scope>DISRUPTION PHENOTYPE</scope>
</reference>
<reference key="17">
    <citation type="journal article" date="2003" name="Proc. Natl. Acad. Sci. U.S.A.">
        <title>Cathepsin L in secretory vesicles functions as a prohormone-processing enzyme for production of the enkephalin peptide neurotransmitter.</title>
        <authorList>
            <person name="Yasothornsrikul S."/>
            <person name="Greenbaum D."/>
            <person name="Medzihradszky K.F."/>
            <person name="Toneff T."/>
            <person name="Bundey R."/>
            <person name="Miller R."/>
            <person name="Schilling B."/>
            <person name="Petermann I."/>
            <person name="Dehnert J."/>
            <person name="Logvinova A."/>
            <person name="Goldsmith P."/>
            <person name="Neveu J.M."/>
            <person name="Lane W.S."/>
            <person name="Gibson B."/>
            <person name="Reinheckel T."/>
            <person name="Peters C."/>
            <person name="Bogyo M."/>
            <person name="Hook V."/>
        </authorList>
    </citation>
    <scope>FUNCTION</scope>
    <scope>DISRUPTION PHENOTYPE</scope>
</reference>
<reference key="18">
    <citation type="journal article" date="2004" name="Mol. Cell">
        <title>A cathepsin L isoform that is devoid of a signal peptide localizes to the nucleus in S phase and processes the CDP/Cux transcription factor.</title>
        <authorList>
            <person name="Goulet B."/>
            <person name="Baruch A."/>
            <person name="Moon N.S."/>
            <person name="Poirier M."/>
            <person name="Sansregret L.L."/>
            <person name="Erickson A."/>
            <person name="Bogyo M."/>
            <person name="Nepveu A."/>
        </authorList>
    </citation>
    <scope>FUNCTION</scope>
</reference>
<reference key="19">
    <citation type="journal article" date="2005" name="Mol. Cell. Proteomics">
        <title>High throughput quantitative glycomics and glycoform-focused proteomics of murine dermis and epidermis.</title>
        <authorList>
            <person name="Uematsu R."/>
            <person name="Furukawa J."/>
            <person name="Nakagawa H."/>
            <person name="Shinohara Y."/>
            <person name="Deguchi K."/>
            <person name="Monde K."/>
            <person name="Nishimura S."/>
        </authorList>
    </citation>
    <scope>GLYCOSYLATION [LARGE SCALE ANALYSIS] AT ASN-221</scope>
    <source>
        <tissue>Epidermis</tissue>
    </source>
</reference>
<reference key="20">
    <citation type="journal article" date="2010" name="Cell">
        <title>A tissue-specific atlas of mouse protein phosphorylation and expression.</title>
        <authorList>
            <person name="Huttlin E.L."/>
            <person name="Jedrychowski M.P."/>
            <person name="Elias J.E."/>
            <person name="Goswami T."/>
            <person name="Rad R."/>
            <person name="Beausoleil S.A."/>
            <person name="Villen J."/>
            <person name="Haas W."/>
            <person name="Sowa M.E."/>
            <person name="Gygi S.P."/>
        </authorList>
    </citation>
    <scope>IDENTIFICATION BY MASS SPECTROMETRY [LARGE SCALE ANALYSIS]</scope>
    <source>
        <tissue>Brain</tissue>
        <tissue>Brown adipose tissue</tissue>
        <tissue>Heart</tissue>
        <tissue>Kidney</tissue>
        <tissue>Liver</tissue>
        <tissue>Lung</tissue>
        <tissue>Pancreas</tissue>
        <tissue>Spleen</tissue>
        <tissue>Testis</tissue>
    </source>
</reference>
<keyword id="KW-1003">Cell membrane</keyword>
<keyword id="KW-0968">Cytoplasmic vesicle</keyword>
<keyword id="KW-0903">Direct protein sequencing</keyword>
<keyword id="KW-1015">Disulfide bond</keyword>
<keyword id="KW-0325">Glycoprotein</keyword>
<keyword id="KW-0378">Hydrolase</keyword>
<keyword id="KW-0458">Lysosome</keyword>
<keyword id="KW-0472">Membrane</keyword>
<keyword id="KW-0479">Metal-binding</keyword>
<keyword id="KW-0645">Protease</keyword>
<keyword id="KW-1185">Reference proteome</keyword>
<keyword id="KW-0964">Secreted</keyword>
<keyword id="KW-0732">Signal</keyword>
<keyword id="KW-0788">Thiol protease</keyword>
<keyword id="KW-0862">Zinc</keyword>
<keyword id="KW-0865">Zymogen</keyword>
<comment type="function">
    <text evidence="1 7 9 10 11 12 13 14 18 19">Thiol protease important for the overall degradation of proteins in lysosomes (Probable). Involved in the solubilization of cross-linked TG/thyroglobulin and in the subsequent release of thyroid hormone thyroxine (T4) by limited proteolysis of TG/thyroglobulin in the thyroid follicle lumen (PubMed:12782676). In neuroendocrine chromaffin cells secretory vesicles, catalyzes the prohormone proenkephalin processing to the active enkephalin peptide neurotransmitter (PubMed:12869695). In thymus, regulates CD4(+) T cell positive selection by generating the major histocompatibility complex class II (MHCII) bound peptide ligands presented by cortical thymic epithelial cells (PubMed:12021314). Also mediates invariant chain processing in cortical thymic epithelial cells (PubMed:9545226). Major elastin-degrading enzyme at neutral pH. Accumulates as a mature and active enzyme in the extracellular space of antigen presenting cells (APCs) to regulate degradation of the extracellular matrix in the course of inflammation (PubMed:12417635). Secreted form generates endostatin from COL18A1 (PubMed:10716919). Critical for cardiac morphology and function (PubMed:11972068). Plays an important role in hair follicle morphogenesis and cycling, as well as epidermal differentiation (PubMed:12163394). Required for maximal stimulation of steroidogenesis by TIMP1 (By similarity).</text>
</comment>
<comment type="catalytic activity">
    <reaction evidence="17">
        <text>Specificity close to that of papain. As compared to cathepsin B, cathepsin L exhibits higher activity toward protein substrates, but has little activity on Z-Arg-Arg-NHMec, and no peptidyl-dipeptidase activity.</text>
        <dbReference type="EC" id="3.4.22.15"/>
    </reaction>
</comment>
<comment type="activity regulation">
    <text evidence="2 8 12">Long isoform of CD74/Ii chain stabilizes the conformation of mature CTSL by binding to its active site and serving as a chaperone to help maintain a pool of mature enzyme in endocytic compartments and extracellular space of APCs (PubMed:11483509, PubMed:12417635). IFNG enhances the conversion into the CTSL mature and active form (PubMed:11483509). Inhibited by CST6. Inhibited by the glycopeptide antibiotic teicoplanin. Inhibited by amantadine (By similarity).</text>
</comment>
<comment type="biophysicochemical properties">
    <phDependence>
        <text evidence="7">Optimum pH is 5.5.</text>
    </phDependence>
</comment>
<comment type="subunit">
    <text evidence="8 12 20">Dimer of a heavy and a light chain linked by disulfide bonds (Probable). Interacts with Long isoform of CD74/Ii chain; the interaction stabilizes the conformation of mature CTSL (PubMed:11483509, PubMed:12417635).</text>
</comment>
<comment type="subcellular location">
    <subcellularLocation>
        <location evidence="8 13">Lysosome</location>
    </subcellularLocation>
    <subcellularLocation>
        <location evidence="13">Apical cell membrane</location>
        <topology evidence="13">Peripheral membrane protein</topology>
        <orientation evidence="13">Extracellular side</orientation>
    </subcellularLocation>
    <subcellularLocation>
        <location evidence="12">Secreted</location>
        <location evidence="12">Extracellular space</location>
    </subcellularLocation>
    <subcellularLocation>
        <location evidence="7">Secreted</location>
    </subcellularLocation>
    <subcellularLocation>
        <location evidence="3">Cytoplasmic vesicle</location>
        <location evidence="3">Secretory vesicle</location>
        <location evidence="3">Chromaffin granule</location>
    </subcellularLocation>
    <text evidence="12 13">Localizes to the apical membrane of thyroid epithelial cells. Released at extracellular space by activated dendritic cells and macrophages (PubMed:12417635).</text>
</comment>
<comment type="tissue specificity">
    <text evidence="8 12 13 18">Expressed in thymus, kidney and liver (PubMed:9545226). Expressed in thyroid epithelial cells. Expressed in cortical thymic epithelial cells (PubMed:9545226). Expressed by antigen presenting cells (APCs) such as dendritic cells and macrophages (PubMed:11483509, PubMed:12417635).</text>
</comment>
<comment type="PTM">
    <text evidence="2 8">During export along the endocytic pathway, pro-CTSL undergoes several proteolytic cleavages to generate the CTSL single-chain and two-chain mature forms, composed of a heavy chain linked to a light chain by disulfide bonds (PubMed:11483509). Autocleavage; produces the single-chain CTSL after cleavage of the propeptide. The cleavage can be intermolecular (By similarity).</text>
</comment>
<comment type="disruption phenotype">
    <text evidence="9 10 11 13 14 18">Enlarged thyroid follicles, reduced extension of the thyroid epithelium and increased levels of Tg/thyroglobulin in the thyroid follicles. Lysosomes are enlarged and CTSB/cathepsin B is mis-localized to the apical membrane of thyroid epithelial cells. Serum levels of thyroid hormone thyroxine (T4) are reduced. The phenotype is more severe in CTSK/cathepsin K and CTSL double knockout mice (PubMed:12782676). Mutants possess reduced levels of Met-enkephalin in brain (PubMed:12869695). Mice show impaired CD4(+) T cell selection (PubMed:12021314). They have reduced numbers of CD4(+) T cells in the thymus and periphery and CD8(+) T cells relatively increased (PubMed:9545226). One-year-old mutant mice show ventricular and atrial enlargement associated with a comparatively small increase in relative heart weight and severely impaired myocardial contraction. They show interstitial fibrosis and pleomorphic nuclei (PubMed:11972068). Cardiomyocytes contain multiple large and apparently fused lysosomes characterized by storage of electron-dense heterogeneous material (PubMed:11972068). Mutants have delayed hair follicle morphogenesis and late onset of the first catagen stage. Their skin show mild epidermal hyperplasia and hyperkeratosis, severe hyperplasia of the sebaceous glands, and structural alterations of hair follicles (PubMed:12163394).</text>
</comment>
<comment type="similarity">
    <text evidence="4 5 6">Belongs to the peptidase C1 family.</text>
</comment>
<proteinExistence type="evidence at protein level"/>
<name>CATL1_MOUSE</name>
<feature type="signal peptide" evidence="17">
    <location>
        <begin position="1"/>
        <end position="17"/>
    </location>
</feature>
<feature type="propeptide" id="PRO_0000026248" description="Activation peptide">
    <location>
        <begin position="18"/>
        <end position="113"/>
    </location>
</feature>
<feature type="chain" id="PRO_0000450792" description="Cathepsin L" evidence="2">
    <location>
        <begin position="114"/>
        <end position="333"/>
    </location>
</feature>
<feature type="chain" id="PRO_0000026249" description="Cathepsin L heavy chain">
    <location>
        <begin position="114"/>
        <end position="288"/>
    </location>
</feature>
<feature type="propeptide" id="PRO_0000026250">
    <location>
        <begin position="289"/>
        <end position="290"/>
    </location>
</feature>
<feature type="chain" id="PRO_0000026251" description="Cathepsin L light chain">
    <location>
        <begin position="291"/>
        <end position="334"/>
    </location>
</feature>
<feature type="active site" evidence="2">
    <location>
        <position position="138"/>
    </location>
</feature>
<feature type="active site" evidence="2">
    <location>
        <position position="276"/>
    </location>
</feature>
<feature type="active site" evidence="2">
    <location>
        <position position="300"/>
    </location>
</feature>
<feature type="binding site" evidence="2">
    <location>
        <position position="122"/>
    </location>
    <ligand>
        <name>Zn(2+)</name>
        <dbReference type="ChEBI" id="CHEBI:29105"/>
        <label>1</label>
    </ligand>
</feature>
<feature type="binding site" evidence="2">
    <location>
        <position position="163"/>
    </location>
    <ligand>
        <name>Zn(2+)</name>
        <dbReference type="ChEBI" id="CHEBI:29105"/>
        <label>2</label>
    </ligand>
</feature>
<feature type="binding site" evidence="2">
    <location>
        <position position="184"/>
    </location>
    <ligand>
        <name>Zn(2+)</name>
        <dbReference type="ChEBI" id="CHEBI:29105"/>
        <label>3</label>
    </ligand>
</feature>
<feature type="binding site" evidence="2">
    <location>
        <position position="199"/>
    </location>
    <ligand>
        <name>Zn(2+)</name>
        <dbReference type="ChEBI" id="CHEBI:29105"/>
        <label>2</label>
    </ligand>
</feature>
<feature type="binding site" evidence="2">
    <location>
        <position position="205"/>
    </location>
    <ligand>
        <name>Zn(2+)</name>
        <dbReference type="ChEBI" id="CHEBI:29105"/>
        <label>4</label>
    </ligand>
</feature>
<feature type="binding site" evidence="2">
    <location>
        <position position="227"/>
    </location>
    <ligand>
        <name>Zn(2+)</name>
        <dbReference type="ChEBI" id="CHEBI:29105"/>
        <label>3</label>
    </ligand>
</feature>
<feature type="binding site" evidence="2">
    <location>
        <position position="250"/>
    </location>
    <ligand>
        <name>Zn(2+)</name>
        <dbReference type="ChEBI" id="CHEBI:29105"/>
        <label>5</label>
    </ligand>
</feature>
<feature type="binding site" evidence="2">
    <location>
        <position position="253"/>
    </location>
    <ligand>
        <name>Zn(2+)</name>
        <dbReference type="ChEBI" id="CHEBI:29105"/>
        <label>5</label>
    </ligand>
</feature>
<feature type="binding site" evidence="2">
    <location>
        <position position="275"/>
    </location>
    <ligand>
        <name>Zn(2+)</name>
        <dbReference type="ChEBI" id="CHEBI:29105"/>
        <label>7</label>
    </ligand>
</feature>
<feature type="site" description="Cleavage; by autolysis" evidence="2">
    <location>
        <begin position="106"/>
        <end position="107"/>
    </location>
</feature>
<feature type="site" description="Cleavage; by autolysis" evidence="2">
    <location>
        <begin position="107"/>
        <end position="108"/>
    </location>
</feature>
<feature type="site" description="Cleavage; by autolysis" evidence="2">
    <location>
        <begin position="112"/>
        <end position="113"/>
    </location>
</feature>
<feature type="site" description="Cleavage; by autolysis" evidence="2">
    <location>
        <begin position="113"/>
        <end position="114"/>
    </location>
</feature>
<feature type="glycosylation site" description="N-linked (GlcNAc...) (high mannose) asparagine" evidence="15 16">
    <location>
        <position position="221"/>
    </location>
</feature>
<feature type="disulfide bond" evidence="2">
    <location>
        <begin position="135"/>
        <end position="178"/>
    </location>
</feature>
<feature type="disulfide bond" evidence="2">
    <location>
        <begin position="169"/>
        <end position="211"/>
    </location>
</feature>
<feature type="disulfide bond" description="Interchain (between heavy and light chains)" evidence="2">
    <location>
        <begin position="269"/>
        <end position="322"/>
    </location>
</feature>
<feature type="sequence conflict" description="In Ref. 2; AAA39984/AAD32136/AAD32137/AAD32138." evidence="19" ref="2">
    <original>M</original>
    <variation>I</variation>
    <location>
        <position position="58"/>
    </location>
</feature>
<feature type="sequence conflict" description="In Ref. 3." evidence="19" ref="3">
    <original>G</original>
    <variation>R</variation>
    <location>
        <position position="177"/>
    </location>
</feature>
<organism>
    <name type="scientific">Mus musculus</name>
    <name type="common">Mouse</name>
    <dbReference type="NCBI Taxonomy" id="10090"/>
    <lineage>
        <taxon>Eukaryota</taxon>
        <taxon>Metazoa</taxon>
        <taxon>Chordata</taxon>
        <taxon>Craniata</taxon>
        <taxon>Vertebrata</taxon>
        <taxon>Euteleostomi</taxon>
        <taxon>Mammalia</taxon>
        <taxon>Eutheria</taxon>
        <taxon>Euarchontoglires</taxon>
        <taxon>Glires</taxon>
        <taxon>Rodentia</taxon>
        <taxon>Myomorpha</taxon>
        <taxon>Muroidea</taxon>
        <taxon>Muridae</taxon>
        <taxon>Murinae</taxon>
        <taxon>Mus</taxon>
        <taxon>Mus</taxon>
    </lineage>
</organism>
<gene>
    <name evidence="21" type="primary">Ctsl</name>
    <name type="synonym">Ctsl1</name>
</gene>
<sequence length="334" mass="37547">MNLLLLLAVLCLGTALATPKFDQTFSAEWHQWKSTHRRLYGTNEEEWRRAIWEKNMRMIQLHNGEYSNGQHGFSMEMNAFGDMTNEEFRQVVNGYRHQKHKKGRLFQEPLMLKIPKSVDWREKGCVTPVKNQGQCGSCWAFSASGCLEGQMFLKTGKLISLSEQNLVDCSHAQGNQGCNGGLMDFAFQYIKENGGLDSEESYPYEAKDGSCKYRAEFAVANDTGFVDIPQQEKALMKAVATVGPISVAMDASHPSLQFYSSGIYYEPNCSSKNLDHGVLLVGYGYEGTDSNKNKYWLVKNSWGSEWGMEGYIKIAKDRDNHCGLATAASYPVVN</sequence>
<evidence type="ECO:0000250" key="1">
    <source>
        <dbReference type="UniProtKB" id="P07154"/>
    </source>
</evidence>
<evidence type="ECO:0000250" key="2">
    <source>
        <dbReference type="UniProtKB" id="P07711"/>
    </source>
</evidence>
<evidence type="ECO:0000250" key="3">
    <source>
        <dbReference type="UniProtKB" id="P25975"/>
    </source>
</evidence>
<evidence type="ECO:0000255" key="4">
    <source>
        <dbReference type="PROSITE-ProRule" id="PRU10088"/>
    </source>
</evidence>
<evidence type="ECO:0000255" key="5">
    <source>
        <dbReference type="PROSITE-ProRule" id="PRU10089"/>
    </source>
</evidence>
<evidence type="ECO:0000255" key="6">
    <source>
        <dbReference type="PROSITE-ProRule" id="PRU10090"/>
    </source>
</evidence>
<evidence type="ECO:0000269" key="7">
    <source>
    </source>
</evidence>
<evidence type="ECO:0000269" key="8">
    <source>
    </source>
</evidence>
<evidence type="ECO:0000269" key="9">
    <source>
    </source>
</evidence>
<evidence type="ECO:0000269" key="10">
    <source>
    </source>
</evidence>
<evidence type="ECO:0000269" key="11">
    <source>
    </source>
</evidence>
<evidence type="ECO:0000269" key="12">
    <source>
    </source>
</evidence>
<evidence type="ECO:0000269" key="13">
    <source>
    </source>
</evidence>
<evidence type="ECO:0000269" key="14">
    <source>
    </source>
</evidence>
<evidence type="ECO:0000269" key="15">
    <source>
    </source>
</evidence>
<evidence type="ECO:0000269" key="16">
    <source>
    </source>
</evidence>
<evidence type="ECO:0000269" key="17">
    <source>
    </source>
</evidence>
<evidence type="ECO:0000269" key="18">
    <source>
    </source>
</evidence>
<evidence type="ECO:0000305" key="19"/>
<evidence type="ECO:0000305" key="20">
    <source>
    </source>
</evidence>
<evidence type="ECO:0000312" key="21">
    <source>
        <dbReference type="MGI" id="MGI:88564"/>
    </source>
</evidence>